<sequence length="195" mass="21771">MPKLGMQSIRRRQLIDATLEAINEVGMHDATIAQIARRAGVSTGIISHYFRDKNGLLEATMRDITSQLRDAVLNRLHALPQGSAEQRLQAIVGGNFDETQVSSAAMKAWLAFWASSMHQPMLYRLQQVSSRRLLSNLVSEFHRELPRQQAQEAGYGLAALIDGLWLRAALSGKPLDKPLAHSLTRHFITQHLPTD</sequence>
<keyword id="KW-0238">DNA-binding</keyword>
<keyword id="KW-0678">Repressor</keyword>
<keyword id="KW-0804">Transcription</keyword>
<keyword id="KW-0805">Transcription regulation</keyword>
<gene>
    <name evidence="2" type="primary">betI</name>
    <name type="ordered locus">EcSMS35_0344</name>
</gene>
<reference key="1">
    <citation type="journal article" date="2008" name="J. Bacteriol.">
        <title>Insights into the environmental resistance gene pool from the genome sequence of the multidrug-resistant environmental isolate Escherichia coli SMS-3-5.</title>
        <authorList>
            <person name="Fricke W.F."/>
            <person name="Wright M.S."/>
            <person name="Lindell A.H."/>
            <person name="Harkins D.M."/>
            <person name="Baker-Austin C."/>
            <person name="Ravel J."/>
            <person name="Stepanauskas R."/>
        </authorList>
    </citation>
    <scope>NUCLEOTIDE SEQUENCE [LARGE SCALE GENOMIC DNA]</scope>
    <source>
        <strain>SMS-3-5 / SECEC</strain>
    </source>
</reference>
<protein>
    <recommendedName>
        <fullName evidence="2">HTH-type transcriptional regulator BetI</fullName>
    </recommendedName>
</protein>
<accession>B1LIJ9</accession>
<proteinExistence type="inferred from homology"/>
<organism>
    <name type="scientific">Escherichia coli (strain SMS-3-5 / SECEC)</name>
    <dbReference type="NCBI Taxonomy" id="439855"/>
    <lineage>
        <taxon>Bacteria</taxon>
        <taxon>Pseudomonadati</taxon>
        <taxon>Pseudomonadota</taxon>
        <taxon>Gammaproteobacteria</taxon>
        <taxon>Enterobacterales</taxon>
        <taxon>Enterobacteriaceae</taxon>
        <taxon>Escherichia</taxon>
    </lineage>
</organism>
<evidence type="ECO:0000250" key="1"/>
<evidence type="ECO:0000255" key="2">
    <source>
        <dbReference type="HAMAP-Rule" id="MF_00768"/>
    </source>
</evidence>
<dbReference type="EMBL" id="CP000970">
    <property type="protein sequence ID" value="ACB16429.1"/>
    <property type="molecule type" value="Genomic_DNA"/>
</dbReference>
<dbReference type="RefSeq" id="WP_001543524.1">
    <property type="nucleotide sequence ID" value="NC_010498.1"/>
</dbReference>
<dbReference type="SMR" id="B1LIJ9"/>
<dbReference type="KEGG" id="ecm:EcSMS35_0344"/>
<dbReference type="HOGENOM" id="CLU_069356_15_4_6"/>
<dbReference type="UniPathway" id="UPA00529"/>
<dbReference type="Proteomes" id="UP000007011">
    <property type="component" value="Chromosome"/>
</dbReference>
<dbReference type="GO" id="GO:0003700">
    <property type="term" value="F:DNA-binding transcription factor activity"/>
    <property type="evidence" value="ECO:0007669"/>
    <property type="project" value="UniProtKB-UniRule"/>
</dbReference>
<dbReference type="GO" id="GO:0000976">
    <property type="term" value="F:transcription cis-regulatory region binding"/>
    <property type="evidence" value="ECO:0007669"/>
    <property type="project" value="TreeGrafter"/>
</dbReference>
<dbReference type="GO" id="GO:0019285">
    <property type="term" value="P:glycine betaine biosynthetic process from choline"/>
    <property type="evidence" value="ECO:0007669"/>
    <property type="project" value="UniProtKB-UniRule"/>
</dbReference>
<dbReference type="GO" id="GO:0045892">
    <property type="term" value="P:negative regulation of DNA-templated transcription"/>
    <property type="evidence" value="ECO:0007669"/>
    <property type="project" value="UniProtKB-UniRule"/>
</dbReference>
<dbReference type="FunFam" id="1.10.357.10:FF:000009">
    <property type="entry name" value="HTH-type transcriptional regulator BetI"/>
    <property type="match status" value="1"/>
</dbReference>
<dbReference type="Gene3D" id="1.10.357.10">
    <property type="entry name" value="Tetracycline Repressor, domain 2"/>
    <property type="match status" value="1"/>
</dbReference>
<dbReference type="HAMAP" id="MF_00768">
    <property type="entry name" value="HTH_type_BetI"/>
    <property type="match status" value="1"/>
</dbReference>
<dbReference type="InterPro" id="IPR039538">
    <property type="entry name" value="BetI_C"/>
</dbReference>
<dbReference type="InterPro" id="IPR023772">
    <property type="entry name" value="DNA-bd_HTH_TetR-type_CS"/>
</dbReference>
<dbReference type="InterPro" id="IPR009057">
    <property type="entry name" value="Homeodomain-like_sf"/>
</dbReference>
<dbReference type="InterPro" id="IPR050109">
    <property type="entry name" value="HTH-type_TetR-like_transc_reg"/>
</dbReference>
<dbReference type="InterPro" id="IPR001647">
    <property type="entry name" value="HTH_TetR"/>
</dbReference>
<dbReference type="InterPro" id="IPR036271">
    <property type="entry name" value="Tet_transcr_reg_TetR-rel_C_sf"/>
</dbReference>
<dbReference type="InterPro" id="IPR017757">
    <property type="entry name" value="Tscrpt_rep_BetI"/>
</dbReference>
<dbReference type="NCBIfam" id="TIGR03384">
    <property type="entry name" value="betaine_BetI"/>
    <property type="match status" value="1"/>
</dbReference>
<dbReference type="NCBIfam" id="NF001978">
    <property type="entry name" value="PRK00767.1"/>
    <property type="match status" value="1"/>
</dbReference>
<dbReference type="PANTHER" id="PTHR30055:SF234">
    <property type="entry name" value="HTH-TYPE TRANSCRIPTIONAL REGULATOR BETI"/>
    <property type="match status" value="1"/>
</dbReference>
<dbReference type="PANTHER" id="PTHR30055">
    <property type="entry name" value="HTH-TYPE TRANSCRIPTIONAL REGULATOR RUTR"/>
    <property type="match status" value="1"/>
</dbReference>
<dbReference type="Pfam" id="PF13977">
    <property type="entry name" value="TetR_C_6"/>
    <property type="match status" value="1"/>
</dbReference>
<dbReference type="Pfam" id="PF00440">
    <property type="entry name" value="TetR_N"/>
    <property type="match status" value="1"/>
</dbReference>
<dbReference type="PRINTS" id="PR00455">
    <property type="entry name" value="HTHTETR"/>
</dbReference>
<dbReference type="SUPFAM" id="SSF46689">
    <property type="entry name" value="Homeodomain-like"/>
    <property type="match status" value="1"/>
</dbReference>
<dbReference type="SUPFAM" id="SSF48498">
    <property type="entry name" value="Tetracyclin repressor-like, C-terminal domain"/>
    <property type="match status" value="1"/>
</dbReference>
<dbReference type="PROSITE" id="PS01081">
    <property type="entry name" value="HTH_TETR_1"/>
    <property type="match status" value="1"/>
</dbReference>
<dbReference type="PROSITE" id="PS50977">
    <property type="entry name" value="HTH_TETR_2"/>
    <property type="match status" value="1"/>
</dbReference>
<comment type="function">
    <text evidence="1">Repressor involved in the biosynthesis of the osmoprotectant glycine betaine. It represses transcription of the choline transporter BetT and the genes of BetAB involved in the synthesis of glycine betaine (By similarity).</text>
</comment>
<comment type="pathway">
    <text>Amine and polyamine biosynthesis; betaine biosynthesis via choline pathway [regulation].</text>
</comment>
<name>BETI_ECOSM</name>
<feature type="chain" id="PRO_1000190484" description="HTH-type transcriptional regulator BetI">
    <location>
        <begin position="1"/>
        <end position="195"/>
    </location>
</feature>
<feature type="domain" description="HTH tetR-type" evidence="2">
    <location>
        <begin position="8"/>
        <end position="68"/>
    </location>
</feature>
<feature type="DNA-binding region" description="H-T-H motif" evidence="2">
    <location>
        <begin position="31"/>
        <end position="50"/>
    </location>
</feature>